<keyword id="KW-0968">Cytoplasmic vesicle</keyword>
<keyword id="KW-0256">Endoplasmic reticulum</keyword>
<keyword id="KW-0967">Endosome</keyword>
<keyword id="KW-0472">Membrane</keyword>
<keyword id="KW-1185">Reference proteome</keyword>
<keyword id="KW-0762">Sugar transport</keyword>
<keyword id="KW-0770">Synapse</keyword>
<keyword id="KW-0812">Transmembrane</keyword>
<keyword id="KW-1133">Transmembrane helix</keyword>
<keyword id="KW-0813">Transport</keyword>
<gene>
    <name evidence="10" type="primary">Slc35d3</name>
    <name evidence="10" type="synonym">Frcl1</name>
</gene>
<accession>Q8BGF8</accession>
<accession>Q9CXD4</accession>
<dbReference type="EMBL" id="AK018094">
    <property type="protein sequence ID" value="BAB31067.1"/>
    <property type="status" value="ALT_SEQ"/>
    <property type="molecule type" value="mRNA"/>
</dbReference>
<dbReference type="EMBL" id="AK042761">
    <property type="protein sequence ID" value="BAC31356.1"/>
    <property type="molecule type" value="mRNA"/>
</dbReference>
<dbReference type="EMBL" id="AK044973">
    <property type="protein sequence ID" value="BAC32165.1"/>
    <property type="molecule type" value="mRNA"/>
</dbReference>
<dbReference type="EMBL" id="AK047610">
    <property type="protein sequence ID" value="BAC33098.1"/>
    <property type="molecule type" value="mRNA"/>
</dbReference>
<dbReference type="CCDS" id="CCDS23719.1"/>
<dbReference type="RefSeq" id="NP_083805.1">
    <property type="nucleotide sequence ID" value="NM_029529.3"/>
</dbReference>
<dbReference type="SMR" id="Q8BGF8"/>
<dbReference type="FunCoup" id="Q8BGF8">
    <property type="interactions" value="542"/>
</dbReference>
<dbReference type="STRING" id="10090.ENSMUSP00000060589"/>
<dbReference type="iPTMnet" id="Q8BGF8"/>
<dbReference type="PhosphoSitePlus" id="Q8BGF8"/>
<dbReference type="jPOST" id="Q8BGF8"/>
<dbReference type="PaxDb" id="10090-ENSMUSP00000060589"/>
<dbReference type="ProteomicsDB" id="260774"/>
<dbReference type="Antibodypedia" id="33021">
    <property type="antibodies" value="63 antibodies from 24 providers"/>
</dbReference>
<dbReference type="DNASU" id="76157"/>
<dbReference type="Ensembl" id="ENSMUST00000059805.6">
    <property type="protein sequence ID" value="ENSMUSP00000060589.5"/>
    <property type="gene ID" value="ENSMUSG00000050473.6"/>
</dbReference>
<dbReference type="GeneID" id="76157"/>
<dbReference type="KEGG" id="mmu:76157"/>
<dbReference type="UCSC" id="uc007enk.1">
    <property type="organism name" value="mouse"/>
</dbReference>
<dbReference type="AGR" id="MGI:1923407"/>
<dbReference type="CTD" id="340146"/>
<dbReference type="MGI" id="MGI:1923407">
    <property type="gene designation" value="Slc35d3"/>
</dbReference>
<dbReference type="VEuPathDB" id="HostDB:ENSMUSG00000050473"/>
<dbReference type="eggNOG" id="KOG1444">
    <property type="taxonomic scope" value="Eukaryota"/>
</dbReference>
<dbReference type="GeneTree" id="ENSGT00940000160083"/>
<dbReference type="HOGENOM" id="CLU_040726_3_0_1"/>
<dbReference type="InParanoid" id="Q8BGF8"/>
<dbReference type="OMA" id="GWKDPTM"/>
<dbReference type="OrthoDB" id="417037at2759"/>
<dbReference type="PhylomeDB" id="Q8BGF8"/>
<dbReference type="TreeFam" id="TF313307"/>
<dbReference type="BioGRID-ORCS" id="76157">
    <property type="hits" value="4 hits in 79 CRISPR screens"/>
</dbReference>
<dbReference type="PRO" id="PR:Q8BGF8"/>
<dbReference type="Proteomes" id="UP000000589">
    <property type="component" value="Chromosome 10"/>
</dbReference>
<dbReference type="RNAct" id="Q8BGF8">
    <property type="molecule type" value="protein"/>
</dbReference>
<dbReference type="Bgee" id="ENSMUSG00000050473">
    <property type="expression patterns" value="Expressed in striatum and 38 other cell types or tissues"/>
</dbReference>
<dbReference type="ExpressionAtlas" id="Q8BGF8">
    <property type="expression patterns" value="baseline and differential"/>
</dbReference>
<dbReference type="GO" id="GO:0005769">
    <property type="term" value="C:early endosome"/>
    <property type="evidence" value="ECO:0000314"/>
    <property type="project" value="MGI"/>
</dbReference>
<dbReference type="GO" id="GO:0031901">
    <property type="term" value="C:early endosome membrane"/>
    <property type="evidence" value="ECO:0000314"/>
    <property type="project" value="UniProtKB"/>
</dbReference>
<dbReference type="GO" id="GO:0005783">
    <property type="term" value="C:endoplasmic reticulum"/>
    <property type="evidence" value="ECO:0000314"/>
    <property type="project" value="MGI"/>
</dbReference>
<dbReference type="GO" id="GO:0005789">
    <property type="term" value="C:endoplasmic reticulum membrane"/>
    <property type="evidence" value="ECO:0007669"/>
    <property type="project" value="UniProtKB-SubCell"/>
</dbReference>
<dbReference type="GO" id="GO:0030672">
    <property type="term" value="C:synaptic vesicle membrane"/>
    <property type="evidence" value="ECO:0000250"/>
    <property type="project" value="UniProtKB"/>
</dbReference>
<dbReference type="GO" id="GO:0030674">
    <property type="term" value="F:protein-macromolecule adaptor activity"/>
    <property type="evidence" value="ECO:0000314"/>
    <property type="project" value="UniProtKB"/>
</dbReference>
<dbReference type="GO" id="GO:0005460">
    <property type="term" value="F:UDP-glucose transmembrane transporter activity"/>
    <property type="evidence" value="ECO:0000314"/>
    <property type="project" value="UniProtKB"/>
</dbReference>
<dbReference type="GO" id="GO:0097009">
    <property type="term" value="P:energy homeostasis"/>
    <property type="evidence" value="ECO:0000315"/>
    <property type="project" value="MGI"/>
</dbReference>
<dbReference type="GO" id="GO:0060155">
    <property type="term" value="P:platelet dense granule organization"/>
    <property type="evidence" value="ECO:0000315"/>
    <property type="project" value="UniProtKB"/>
</dbReference>
<dbReference type="GO" id="GO:0010508">
    <property type="term" value="P:positive regulation of autophagy"/>
    <property type="evidence" value="ECO:0000315"/>
    <property type="project" value="UniProtKB"/>
</dbReference>
<dbReference type="GO" id="GO:0070863">
    <property type="term" value="P:positive regulation of protein exit from endoplasmic reticulum"/>
    <property type="evidence" value="ECO:0000315"/>
    <property type="project" value="MGI"/>
</dbReference>
<dbReference type="GO" id="GO:0032527">
    <property type="term" value="P:protein exit from endoplasmic reticulum"/>
    <property type="evidence" value="ECO:0000315"/>
    <property type="project" value="MGI"/>
</dbReference>
<dbReference type="GO" id="GO:0015786">
    <property type="term" value="P:UDP-glucose transmembrane transport"/>
    <property type="evidence" value="ECO:0000314"/>
    <property type="project" value="UniProtKB"/>
</dbReference>
<dbReference type="InterPro" id="IPR050186">
    <property type="entry name" value="TPT_transporter"/>
</dbReference>
<dbReference type="PANTHER" id="PTHR11132">
    <property type="entry name" value="SOLUTE CARRIER FAMILY 35"/>
    <property type="match status" value="1"/>
</dbReference>
<comment type="function">
    <text evidence="4 5 8">Probable UDP-glucose transmembrane transporter involved in UDP-glucose transport from the cytosol to the lumen of synaptic vesicles (PubMed:34269178). It is involved in platelet dense granules maturation (PubMed:17062724, PubMed:22611153).</text>
</comment>
<comment type="function">
    <text evidence="6 7">Alternatively, could function as a molecular adapter enhancing the formation of the PI3KC3-C1/AIC/autophagy initiation complex to promote autophagy in dopaminergic neurons (PubMed:27171858). Could also regulate the plasma membrane localization of the D(1A) dopamine receptor/DRD1 and dopamine signaling (PubMed:24550737).</text>
</comment>
<comment type="catalytic activity">
    <reaction evidence="8">
        <text>UDP-alpha-D-glucose(in) = UDP-alpha-D-glucose(out)</text>
        <dbReference type="Rhea" id="RHEA:76195"/>
        <dbReference type="ChEBI" id="CHEBI:58885"/>
    </reaction>
</comment>
<comment type="activity regulation">
    <text evidence="1">Inhibited by proton uncouplers that directly abolish the proton electrochemical gradient.</text>
</comment>
<comment type="subunit">
    <text evidence="7">Could interact with ATG14, BECN1 and PIK3C3 that form the PI3KC3-C1/AIC/autophagy initiation complex; enhancing the formation of the AIC and promoting autophagy.</text>
</comment>
<comment type="subcellular location">
    <subcellularLocation>
        <location evidence="1">Cytoplasmic vesicle</location>
        <location evidence="1">Secretory vesicle</location>
        <location evidence="1">Synaptic vesicle membrane</location>
        <topology evidence="2">Multi-pass membrane protein</topology>
    </subcellularLocation>
    <subcellularLocation>
        <location evidence="5">Early endosome membrane</location>
        <topology evidence="2">Multi-pass membrane protein</topology>
    </subcellularLocation>
    <subcellularLocation>
        <location evidence="6">Endoplasmic reticulum membrane</location>
        <topology evidence="2">Multi-pass membrane protein</topology>
    </subcellularLocation>
    <text evidence="5">Active at early endosome membrane in the biosynthesis of mature platelet-dense granules.</text>
</comment>
<comment type="tissue specificity">
    <text evidence="4 5 7">Expressed in brain (PubMed:17062724). Expressed in subsets of dopaminergic neurons (PubMed:27171858). Expressed in maturing megakaryocytes (PubMed:22611153).</text>
</comment>
<comment type="disruption phenotype">
    <text evidence="4 5 6 7">Mice lacking Slc35d3 display decreased concentrations of serotonin in platelet-dense granules and altered hemostasis (PubMed:17062724, PubMed:22611153). Mice also show a loss of dopaminergic neurons and exhibit metabolic syndrome and lowered energy expenditure (PubMed:24550737, PubMed:27171858).</text>
</comment>
<comment type="similarity">
    <text evidence="9">Belongs to the TPT transporter family. SLC35D subfamily.</text>
</comment>
<comment type="sequence caution" evidence="9">
    <conflict type="frameshift">
        <sequence resource="EMBL-CDS" id="BAB31067"/>
    </conflict>
</comment>
<proteinExistence type="evidence at protein level"/>
<name>S35D3_MOUSE</name>
<sequence>MRQLCRGRVLGISVAIAHGVFSGSLNILLKFLISRYQFSFLTLVQCLTSSTAALSLELLRRLGLIAVPPFGLSLARSFAGVAVLSTLQSSLTLWSLRGLSLPMYVVFKRCLPLVTMLIGVLVLKNGAPSPGVLAAVLITTCGAALAGAGDLTGDPIGYVTGVLAVLVHAAYLVLIQKASADTEHGPLTAQYVIAVSATPLLVICSFASTDSIHAWTFPGWKDPAMVSIFVACILIGCAMNFTTLHCTYINSAVTTSFVGVVKSIATITVGMVAFSDVEPTSLFIAGVVVNTLGSIIYCVAKFLETRRQSNYEDLESQAEGEERQPSGDQLPFVMEELPAKSGNSEPESAEGAGDSVQQGGQESRGSIRGISLAARSSRAEGHSDEVGRRSLKDTYLEVWRLVRGTKYMKKDYLMENEALPSP</sequence>
<protein>
    <recommendedName>
        <fullName evidence="10">Solute carrier family 35 member D3</fullName>
    </recommendedName>
    <alternativeName>
        <fullName evidence="10">Fringe connection-like protein 1</fullName>
    </alternativeName>
</protein>
<feature type="chain" id="PRO_0000307728" description="Solute carrier family 35 member D3">
    <location>
        <begin position="1"/>
        <end position="422"/>
    </location>
</feature>
<feature type="transmembrane region" description="Helical" evidence="2">
    <location>
        <begin position="9"/>
        <end position="29"/>
    </location>
</feature>
<feature type="transmembrane region" description="Helical" evidence="2">
    <location>
        <begin position="38"/>
        <end position="58"/>
    </location>
</feature>
<feature type="transmembrane region" description="Helical" evidence="2">
    <location>
        <begin position="64"/>
        <end position="84"/>
    </location>
</feature>
<feature type="transmembrane region" description="Helical" evidence="2">
    <location>
        <begin position="103"/>
        <end position="123"/>
    </location>
</feature>
<feature type="transmembrane region" description="Helical" evidence="2">
    <location>
        <begin position="131"/>
        <end position="151"/>
    </location>
</feature>
<feature type="transmembrane region" description="Helical" evidence="2">
    <location>
        <begin position="155"/>
        <end position="175"/>
    </location>
</feature>
<feature type="transmembrane region" description="Helical" evidence="2">
    <location>
        <begin position="187"/>
        <end position="207"/>
    </location>
</feature>
<feature type="transmembrane region" description="Helical" evidence="2">
    <location>
        <begin position="224"/>
        <end position="244"/>
    </location>
</feature>
<feature type="transmembrane region" description="Helical" evidence="2">
    <location>
        <begin position="257"/>
        <end position="277"/>
    </location>
</feature>
<feature type="transmembrane region" description="Helical" evidence="2">
    <location>
        <begin position="280"/>
        <end position="300"/>
    </location>
</feature>
<feature type="region of interest" description="Disordered" evidence="3">
    <location>
        <begin position="339"/>
        <end position="365"/>
    </location>
</feature>
<feature type="compositionally biased region" description="Polar residues" evidence="3">
    <location>
        <begin position="355"/>
        <end position="364"/>
    </location>
</feature>
<feature type="sequence conflict" description="In Ref. 1; BAB31067." evidence="9" ref="1">
    <original>S</original>
    <variation>F</variation>
    <location>
        <position position="383"/>
    </location>
</feature>
<reference key="1">
    <citation type="journal article" date="2005" name="Science">
        <title>The transcriptional landscape of the mammalian genome.</title>
        <authorList>
            <person name="Carninci P."/>
            <person name="Kasukawa T."/>
            <person name="Katayama S."/>
            <person name="Gough J."/>
            <person name="Frith M.C."/>
            <person name="Maeda N."/>
            <person name="Oyama R."/>
            <person name="Ravasi T."/>
            <person name="Lenhard B."/>
            <person name="Wells C."/>
            <person name="Kodzius R."/>
            <person name="Shimokawa K."/>
            <person name="Bajic V.B."/>
            <person name="Brenner S.E."/>
            <person name="Batalov S."/>
            <person name="Forrest A.R."/>
            <person name="Zavolan M."/>
            <person name="Davis M.J."/>
            <person name="Wilming L.G."/>
            <person name="Aidinis V."/>
            <person name="Allen J.E."/>
            <person name="Ambesi-Impiombato A."/>
            <person name="Apweiler R."/>
            <person name="Aturaliya R.N."/>
            <person name="Bailey T.L."/>
            <person name="Bansal M."/>
            <person name="Baxter L."/>
            <person name="Beisel K.W."/>
            <person name="Bersano T."/>
            <person name="Bono H."/>
            <person name="Chalk A.M."/>
            <person name="Chiu K.P."/>
            <person name="Choudhary V."/>
            <person name="Christoffels A."/>
            <person name="Clutterbuck D.R."/>
            <person name="Crowe M.L."/>
            <person name="Dalla E."/>
            <person name="Dalrymple B.P."/>
            <person name="de Bono B."/>
            <person name="Della Gatta G."/>
            <person name="di Bernardo D."/>
            <person name="Down T."/>
            <person name="Engstrom P."/>
            <person name="Fagiolini M."/>
            <person name="Faulkner G."/>
            <person name="Fletcher C.F."/>
            <person name="Fukushima T."/>
            <person name="Furuno M."/>
            <person name="Futaki S."/>
            <person name="Gariboldi M."/>
            <person name="Georgii-Hemming P."/>
            <person name="Gingeras T.R."/>
            <person name="Gojobori T."/>
            <person name="Green R.E."/>
            <person name="Gustincich S."/>
            <person name="Harbers M."/>
            <person name="Hayashi Y."/>
            <person name="Hensch T.K."/>
            <person name="Hirokawa N."/>
            <person name="Hill D."/>
            <person name="Huminiecki L."/>
            <person name="Iacono M."/>
            <person name="Ikeo K."/>
            <person name="Iwama A."/>
            <person name="Ishikawa T."/>
            <person name="Jakt M."/>
            <person name="Kanapin A."/>
            <person name="Katoh M."/>
            <person name="Kawasawa Y."/>
            <person name="Kelso J."/>
            <person name="Kitamura H."/>
            <person name="Kitano H."/>
            <person name="Kollias G."/>
            <person name="Krishnan S.P."/>
            <person name="Kruger A."/>
            <person name="Kummerfeld S.K."/>
            <person name="Kurochkin I.V."/>
            <person name="Lareau L.F."/>
            <person name="Lazarevic D."/>
            <person name="Lipovich L."/>
            <person name="Liu J."/>
            <person name="Liuni S."/>
            <person name="McWilliam S."/>
            <person name="Madan Babu M."/>
            <person name="Madera M."/>
            <person name="Marchionni L."/>
            <person name="Matsuda H."/>
            <person name="Matsuzawa S."/>
            <person name="Miki H."/>
            <person name="Mignone F."/>
            <person name="Miyake S."/>
            <person name="Morris K."/>
            <person name="Mottagui-Tabar S."/>
            <person name="Mulder N."/>
            <person name="Nakano N."/>
            <person name="Nakauchi H."/>
            <person name="Ng P."/>
            <person name="Nilsson R."/>
            <person name="Nishiguchi S."/>
            <person name="Nishikawa S."/>
            <person name="Nori F."/>
            <person name="Ohara O."/>
            <person name="Okazaki Y."/>
            <person name="Orlando V."/>
            <person name="Pang K.C."/>
            <person name="Pavan W.J."/>
            <person name="Pavesi G."/>
            <person name="Pesole G."/>
            <person name="Petrovsky N."/>
            <person name="Piazza S."/>
            <person name="Reed J."/>
            <person name="Reid J.F."/>
            <person name="Ring B.Z."/>
            <person name="Ringwald M."/>
            <person name="Rost B."/>
            <person name="Ruan Y."/>
            <person name="Salzberg S.L."/>
            <person name="Sandelin A."/>
            <person name="Schneider C."/>
            <person name="Schoenbach C."/>
            <person name="Sekiguchi K."/>
            <person name="Semple C.A."/>
            <person name="Seno S."/>
            <person name="Sessa L."/>
            <person name="Sheng Y."/>
            <person name="Shibata Y."/>
            <person name="Shimada H."/>
            <person name="Shimada K."/>
            <person name="Silva D."/>
            <person name="Sinclair B."/>
            <person name="Sperling S."/>
            <person name="Stupka E."/>
            <person name="Sugiura K."/>
            <person name="Sultana R."/>
            <person name="Takenaka Y."/>
            <person name="Taki K."/>
            <person name="Tammoja K."/>
            <person name="Tan S.L."/>
            <person name="Tang S."/>
            <person name="Taylor M.S."/>
            <person name="Tegner J."/>
            <person name="Teichmann S.A."/>
            <person name="Ueda H.R."/>
            <person name="van Nimwegen E."/>
            <person name="Verardo R."/>
            <person name="Wei C.L."/>
            <person name="Yagi K."/>
            <person name="Yamanishi H."/>
            <person name="Zabarovsky E."/>
            <person name="Zhu S."/>
            <person name="Zimmer A."/>
            <person name="Hide W."/>
            <person name="Bult C."/>
            <person name="Grimmond S.M."/>
            <person name="Teasdale R.D."/>
            <person name="Liu E.T."/>
            <person name="Brusic V."/>
            <person name="Quackenbush J."/>
            <person name="Wahlestedt C."/>
            <person name="Mattick J.S."/>
            <person name="Hume D.A."/>
            <person name="Kai C."/>
            <person name="Sasaki D."/>
            <person name="Tomaru Y."/>
            <person name="Fukuda S."/>
            <person name="Kanamori-Katayama M."/>
            <person name="Suzuki M."/>
            <person name="Aoki J."/>
            <person name="Arakawa T."/>
            <person name="Iida J."/>
            <person name="Imamura K."/>
            <person name="Itoh M."/>
            <person name="Kato T."/>
            <person name="Kawaji H."/>
            <person name="Kawagashira N."/>
            <person name="Kawashima T."/>
            <person name="Kojima M."/>
            <person name="Kondo S."/>
            <person name="Konno H."/>
            <person name="Nakano K."/>
            <person name="Ninomiya N."/>
            <person name="Nishio T."/>
            <person name="Okada M."/>
            <person name="Plessy C."/>
            <person name="Shibata K."/>
            <person name="Shiraki T."/>
            <person name="Suzuki S."/>
            <person name="Tagami M."/>
            <person name="Waki K."/>
            <person name="Watahiki A."/>
            <person name="Okamura-Oho Y."/>
            <person name="Suzuki H."/>
            <person name="Kawai J."/>
            <person name="Hayashizaki Y."/>
        </authorList>
    </citation>
    <scope>NUCLEOTIDE SEQUENCE [LARGE SCALE MRNA]</scope>
    <source>
        <strain>C57BL/6J</strain>
        <tissue>Cerebellum</tissue>
        <tissue>Corpus striatum</tissue>
        <tissue>Embryo</tissue>
    </source>
</reference>
<reference key="2">
    <citation type="journal article" date="2007" name="Blood">
        <title>The Slc35d3 gene, encoding an orphan nucleotide sugar transporter, regulates platelet-dense granules.</title>
        <authorList>
            <person name="Chintala S."/>
            <person name="Tan J."/>
            <person name="Gautam R."/>
            <person name="Rusiniak M.E."/>
            <person name="Guo X."/>
            <person name="Li W."/>
            <person name="Gahl W.A."/>
            <person name="Huizing M."/>
            <person name="Spritz R.A."/>
            <person name="Hutton S."/>
            <person name="Novak E.K."/>
            <person name="Swank R.T."/>
        </authorList>
    </citation>
    <scope>FUNCTION</scope>
    <scope>TISSUE SPECIFICITY</scope>
    <scope>DISRUPTION PHENOTYPE</scope>
</reference>
<reference key="3">
    <citation type="journal article" date="2012" name="Blood">
        <title>SLC35D3 delivery from megakaryocyte early endosomes is required for platelet dense granule biogenesis and is differentially defective in Hermansky-Pudlak syndrome models.</title>
        <authorList>
            <person name="Meng R."/>
            <person name="Wang Y."/>
            <person name="Yao Y."/>
            <person name="Zhang Z."/>
            <person name="Harper D.C."/>
            <person name="Heijnen H.F."/>
            <person name="Sitaram A."/>
            <person name="Li W."/>
            <person name="Raposo G."/>
            <person name="Weiss M.J."/>
            <person name="Poncz M."/>
            <person name="Marks M.S."/>
        </authorList>
    </citation>
    <scope>FUNCTION</scope>
    <scope>SUBCELLULAR LOCATION</scope>
    <scope>TISSUE SPECIFICITY</scope>
    <scope>DISRUPTION PHENOTYPE</scope>
</reference>
<reference key="4">
    <citation type="journal article" date="2014" name="PLoS Genet.">
        <title>Mutation of SLC35D3 causes metabolic syndrome by impairing dopamine signaling in striatal D1 neurons.</title>
        <authorList>
            <person name="Zhang Z."/>
            <person name="Hao C.J."/>
            <person name="Li C.G."/>
            <person name="Zang D.J."/>
            <person name="Zhao J."/>
            <person name="Li X.N."/>
            <person name="Wei A.H."/>
            <person name="Wei Z.B."/>
            <person name="Yang L."/>
            <person name="He X."/>
            <person name="Zhen X.C."/>
            <person name="Gao X."/>
            <person name="Speakman J.R."/>
            <person name="Li W."/>
        </authorList>
    </citation>
    <scope>FUNCTION</scope>
    <scope>SUBCELLULAR LOCATION</scope>
    <scope>DISRUPTION PHENOTYPE</scope>
</reference>
<reference key="5">
    <citation type="journal article" date="2016" name="Autophagy">
        <title>SLC35D3 increases autophagic activity in midbrain dopaminergic neurons by enhancing BECN1-ATG14-PIK3C3 complex formation.</title>
        <authorList>
            <person name="Wei Z.B."/>
            <person name="Yuan Y.F."/>
            <person name="Jaouen F."/>
            <person name="Ma M.S."/>
            <person name="Hao C.J."/>
            <person name="Zhang Z."/>
            <person name="Chen Q."/>
            <person name="Yuan Z."/>
            <person name="Yu L."/>
            <person name="Beurrier C."/>
            <person name="Li W."/>
        </authorList>
    </citation>
    <scope>FUNCTION</scope>
    <scope>INTERACTION WITH ATG14; BECN1 AND PIK3C3</scope>
    <scope>TISSUE SPECIFICITY</scope>
    <scope>DISRUPTION PHENOTYPE</scope>
</reference>
<reference key="6">
    <citation type="journal article" date="2021" name="Elife">
        <title>Localization, proteomics, and metabolite profiling reveal a putative vesicular transporter for UDP-glucose.</title>
        <authorList>
            <person name="Qian C."/>
            <person name="Wu Z."/>
            <person name="Sun R."/>
            <person name="Yu H."/>
            <person name="Zeng J."/>
            <person name="Rao Y."/>
            <person name="Li Y."/>
        </authorList>
    </citation>
    <scope>FUNCTION</scope>
    <scope>TRANSPORTER ACTIVITY</scope>
</reference>
<organism>
    <name type="scientific">Mus musculus</name>
    <name type="common">Mouse</name>
    <dbReference type="NCBI Taxonomy" id="10090"/>
    <lineage>
        <taxon>Eukaryota</taxon>
        <taxon>Metazoa</taxon>
        <taxon>Chordata</taxon>
        <taxon>Craniata</taxon>
        <taxon>Vertebrata</taxon>
        <taxon>Euteleostomi</taxon>
        <taxon>Mammalia</taxon>
        <taxon>Eutheria</taxon>
        <taxon>Euarchontoglires</taxon>
        <taxon>Glires</taxon>
        <taxon>Rodentia</taxon>
        <taxon>Myomorpha</taxon>
        <taxon>Muroidea</taxon>
        <taxon>Muridae</taxon>
        <taxon>Murinae</taxon>
        <taxon>Mus</taxon>
        <taxon>Mus</taxon>
    </lineage>
</organism>
<evidence type="ECO:0000250" key="1">
    <source>
        <dbReference type="UniProtKB" id="Q5M8T2"/>
    </source>
</evidence>
<evidence type="ECO:0000255" key="2"/>
<evidence type="ECO:0000256" key="3">
    <source>
        <dbReference type="SAM" id="MobiDB-lite"/>
    </source>
</evidence>
<evidence type="ECO:0000269" key="4">
    <source>
    </source>
</evidence>
<evidence type="ECO:0000269" key="5">
    <source>
    </source>
</evidence>
<evidence type="ECO:0000269" key="6">
    <source>
    </source>
</evidence>
<evidence type="ECO:0000269" key="7">
    <source>
    </source>
</evidence>
<evidence type="ECO:0000269" key="8">
    <source>
    </source>
</evidence>
<evidence type="ECO:0000305" key="9"/>
<evidence type="ECO:0000312" key="10">
    <source>
        <dbReference type="MGI" id="MGI:1923407"/>
    </source>
</evidence>